<keyword id="KW-0175">Coiled coil</keyword>
<keyword id="KW-0963">Cytoplasm</keyword>
<keyword id="KW-0391">Immunity</keyword>
<keyword id="KW-0399">Innate immunity</keyword>
<keyword id="KW-1017">Isopeptide bond</keyword>
<keyword id="KW-0539">Nucleus</keyword>
<keyword id="KW-1185">Reference proteome</keyword>
<keyword id="KW-0964">Secreted</keyword>
<keyword id="KW-0832">Ubl conjugation</keyword>
<protein>
    <recommendedName>
        <fullName evidence="2">N-myc-interactor</fullName>
        <shortName evidence="2">Nmi</shortName>
    </recommendedName>
    <alternativeName>
        <fullName evidence="2">N-myc and STAT interactor</fullName>
    </alternativeName>
</protein>
<feature type="chain" id="PRO_0000253475" description="N-myc-interactor">
    <location>
        <begin position="1"/>
        <end position="309"/>
    </location>
</feature>
<feature type="domain" description="NID 1" evidence="3">
    <location>
        <begin position="104"/>
        <end position="193"/>
    </location>
</feature>
<feature type="domain" description="NID 2" evidence="3">
    <location>
        <begin position="202"/>
        <end position="294"/>
    </location>
</feature>
<feature type="coiled-coil region" evidence="3">
    <location>
        <begin position="23"/>
        <end position="65"/>
    </location>
</feature>
<feature type="cross-link" description="Glycyl lysine isopeptide (Lys-Gly) (interchain with G-Cter in ubiquitin)" evidence="2">
    <location>
        <position position="23"/>
    </location>
</feature>
<gene>
    <name type="primary">NMI</name>
</gene>
<organism>
    <name type="scientific">Bos taurus</name>
    <name type="common">Bovine</name>
    <dbReference type="NCBI Taxonomy" id="9913"/>
    <lineage>
        <taxon>Eukaryota</taxon>
        <taxon>Metazoa</taxon>
        <taxon>Chordata</taxon>
        <taxon>Craniata</taxon>
        <taxon>Vertebrata</taxon>
        <taxon>Euteleostomi</taxon>
        <taxon>Mammalia</taxon>
        <taxon>Eutheria</taxon>
        <taxon>Laurasiatheria</taxon>
        <taxon>Artiodactyla</taxon>
        <taxon>Ruminantia</taxon>
        <taxon>Pecora</taxon>
        <taxon>Bovidae</taxon>
        <taxon>Bovinae</taxon>
        <taxon>Bos</taxon>
    </lineage>
</organism>
<accession>Q3ZCL3</accession>
<comment type="function">
    <text evidence="1 2">Acts as a signaling pathway regulator involved in innate immune system response. In response to interleukin 2/IL2 and interferon IFN-gamma/IFNG, interacts with signal transducer and activator of transcription/STAT which activate the transcription of downstream genes involved in a multitude of signals for development and homeostasis. Enhances the recruitment of CBP/p300 coactivators to STAT1 and STAT5, resulting in increased STAT1- and STAT5-dependent transcription. In response to interferon IFN-alpha, associates in a complex with signaling pathway regulator IFI35 to regulate immune response; the complex formation prevents proteasome-mediated degradation of IFI35. In complex with IFI35, inhibits virus-triggered type I IFN-beta production when ubiquitinated by ubiquitin-protein ligase TRIM21. In complex with IFI35, negatively regulates nuclear factor NF-kappa-B signaling by inhibiting the nuclear translocation, activation and transcription of NF-kappa-B subunit p65/RELA, resulting in the inhibition of endothelial cell proliferation, migration and re-endothelialization of injured arteries (By similarity). Negatively regulates virus-triggered type I interferon/IFN production by inducing proteosome-dependent degradation of IRF7, a transcriptional regulator of type I IFN, thereby interfering with cellular antiviral responses (By similarity). Beside its role as an intracellular signaling pathway regulator, also functions extracellularly as damage-associated molecular patterns (DAMPs) to promote inflammation, when actively released by macrophage to the extracellular space during cell injury or pathogen invasion. Macrophage-secreted NMI activates NF-kappa-B signaling in adjacent macrophages through Toll-like receptor 4/TLR4 binding and activation, thereby inducing NF-kappa-B translocation from the cytoplasm into the nucleus which promotes the release of pro-inflammatory cytokines (By similarity).</text>
</comment>
<comment type="subunit">
    <text evidence="1 2">Interacts with MYCN and MYC, as well as with other transcription factors with a Zip, HLH or a HLH-Zip motif. Interacts with all STAT proteins except STAT2 (By similarity). Interacts with IRF7, the interaction is direct and leads to the inhibition of IRF7-mediated type I IFN production (By similarity). Interacts (via coiled-coil domain) with TRIM21 (via the SPRY domain); the interaction leads to 'Lys-63'-linked ubiquitination of NMI. Interacts with IFI35; the interaction is direct and is facilitated by TRIM21. Interacts with TLR4; the interaction is direct and leads to NF-kappa-B activation (By similarity).</text>
</comment>
<comment type="subcellular location">
    <subcellularLocation>
        <location evidence="2">Cytoplasm</location>
    </subcellularLocation>
    <subcellularLocation>
        <location evidence="2">Nucleus</location>
    </subcellularLocation>
    <subcellularLocation>
        <location evidence="2">Secreted</location>
    </subcellularLocation>
    <text evidence="2">Cytoplasmic NMI localizes in punctate granular structures. Nuclear localization increased following IFN-alpha treatment. Extracelullar following secretion by macrophage.</text>
</comment>
<comment type="domain">
    <text evidence="2">The coiled-coil domain is necessary for interaction with TRIM21 and for TRIM21-mediated ubiquitination of NMI.</text>
</comment>
<comment type="domain">
    <text evidence="1 2">The NID domains are necessary for the interaction with IFI35. The NID domain 1 is necessary and IRF7.</text>
</comment>
<comment type="PTM">
    <text evidence="2">Ubiquitinated. 'Lys-63'-linked ubiquitination by TRIM21 promotes interaction with IFI35 and inhibits virus-triggered type I IFN-beta production.</text>
</comment>
<comment type="similarity">
    <text evidence="4">Belongs to the NMI family.</text>
</comment>
<comment type="caution">
    <text evidence="2">The TRIM21-mediated ubiquitinated residue is not conserved in mice, therefore it remains unclear whether the physiological role of NMI ubiquitination is preserved throughout mammals.</text>
</comment>
<reference key="1">
    <citation type="submission" date="2005-08" db="EMBL/GenBank/DDBJ databases">
        <authorList>
            <consortium name="NIH - Mammalian Gene Collection (MGC) project"/>
        </authorList>
    </citation>
    <scope>NUCLEOTIDE SEQUENCE [LARGE SCALE MRNA]</scope>
    <source>
        <strain>Crossbred X Angus</strain>
        <tissue>Ileum</tissue>
    </source>
</reference>
<evidence type="ECO:0000250" key="1">
    <source>
        <dbReference type="UniProtKB" id="O35309"/>
    </source>
</evidence>
<evidence type="ECO:0000250" key="2">
    <source>
        <dbReference type="UniProtKB" id="Q13287"/>
    </source>
</evidence>
<evidence type="ECO:0000255" key="3"/>
<evidence type="ECO:0000305" key="4"/>
<proteinExistence type="evidence at transcript level"/>
<sequence>MSADEDNKEQVLKECEQAEEIMKDKQNQKLISEITKENIQLKEEIKKLEAELQETTRTSQINEDIPETKIKFTSVENPESDSEFSDISYSCQVSSKVPYELQKGQALITFEKEEVAQNVIRMEYHHVQVQNENVMLTANPVSLNSGVKFQVHVGVSKMKINVTDIPDELPESQMRDKLELSFSKSRNGGGEVEYVEYNKQTRSALITFVESGVADKILKMKDYPLYINQNCHRVTVYPYTETHLKKFQVFSGVSKRTVLLTGLKHLQTTDEEVVEDFISIHFQREKNGGGEVEVVKCSLGQPHTAYFEE</sequence>
<name>NMI_BOVIN</name>
<dbReference type="EMBL" id="BC102054">
    <property type="protein sequence ID" value="AAI02055.1"/>
    <property type="molecule type" value="mRNA"/>
</dbReference>
<dbReference type="RefSeq" id="NP_001030270.1">
    <property type="nucleotide sequence ID" value="NM_001035098.2"/>
</dbReference>
<dbReference type="SMR" id="Q3ZCL3"/>
<dbReference type="FunCoup" id="Q3ZCL3">
    <property type="interactions" value="753"/>
</dbReference>
<dbReference type="STRING" id="9913.ENSBTAP00000043271"/>
<dbReference type="PaxDb" id="9913-ENSBTAP00000021580"/>
<dbReference type="GeneID" id="511280"/>
<dbReference type="KEGG" id="bta:511280"/>
<dbReference type="CTD" id="9111"/>
<dbReference type="eggNOG" id="ENOG502QVH1">
    <property type="taxonomic scope" value="Eukaryota"/>
</dbReference>
<dbReference type="InParanoid" id="Q3ZCL3"/>
<dbReference type="OrthoDB" id="9903237at2759"/>
<dbReference type="Proteomes" id="UP000009136">
    <property type="component" value="Unplaced"/>
</dbReference>
<dbReference type="GO" id="GO:0005737">
    <property type="term" value="C:cytoplasm"/>
    <property type="evidence" value="ECO:0000250"/>
    <property type="project" value="UniProtKB"/>
</dbReference>
<dbReference type="GO" id="GO:0005829">
    <property type="term" value="C:cytosol"/>
    <property type="evidence" value="ECO:0000250"/>
    <property type="project" value="UniProtKB"/>
</dbReference>
<dbReference type="GO" id="GO:0005615">
    <property type="term" value="C:extracellular space"/>
    <property type="evidence" value="ECO:0000250"/>
    <property type="project" value="UniProtKB"/>
</dbReference>
<dbReference type="GO" id="GO:0016020">
    <property type="term" value="C:membrane"/>
    <property type="evidence" value="ECO:0000250"/>
    <property type="project" value="UniProtKB"/>
</dbReference>
<dbReference type="GO" id="GO:0005634">
    <property type="term" value="C:nucleus"/>
    <property type="evidence" value="ECO:0000250"/>
    <property type="project" value="UniProtKB"/>
</dbReference>
<dbReference type="GO" id="GO:0045087">
    <property type="term" value="P:innate immune response"/>
    <property type="evidence" value="ECO:0007669"/>
    <property type="project" value="UniProtKB-KW"/>
</dbReference>
<dbReference type="GO" id="GO:0002281">
    <property type="term" value="P:macrophage activation involved in immune response"/>
    <property type="evidence" value="ECO:0000250"/>
    <property type="project" value="UniProtKB"/>
</dbReference>
<dbReference type="GO" id="GO:0008285">
    <property type="term" value="P:negative regulation of cell population proliferation"/>
    <property type="evidence" value="ECO:0000250"/>
    <property type="project" value="UniProtKB"/>
</dbReference>
<dbReference type="GO" id="GO:0045824">
    <property type="term" value="P:negative regulation of innate immune response"/>
    <property type="evidence" value="ECO:0000250"/>
    <property type="project" value="UniProtKB"/>
</dbReference>
<dbReference type="GO" id="GO:1901223">
    <property type="term" value="P:negative regulation of non-canonical NF-kappaB signal transduction"/>
    <property type="evidence" value="ECO:0000250"/>
    <property type="project" value="UniProtKB"/>
</dbReference>
<dbReference type="GO" id="GO:0050729">
    <property type="term" value="P:positive regulation of inflammatory response"/>
    <property type="evidence" value="ECO:0000250"/>
    <property type="project" value="UniProtKB"/>
</dbReference>
<dbReference type="GO" id="GO:0045089">
    <property type="term" value="P:positive regulation of innate immune response"/>
    <property type="evidence" value="ECO:0000250"/>
    <property type="project" value="UniProtKB"/>
</dbReference>
<dbReference type="GO" id="GO:1901224">
    <property type="term" value="P:positive regulation of non-canonical NF-kappaB signal transduction"/>
    <property type="evidence" value="ECO:0000250"/>
    <property type="project" value="UniProtKB"/>
</dbReference>
<dbReference type="GO" id="GO:0034142">
    <property type="term" value="P:toll-like receptor 4 signaling pathway"/>
    <property type="evidence" value="ECO:0000250"/>
    <property type="project" value="UniProtKB"/>
</dbReference>
<dbReference type="CDD" id="cd12544">
    <property type="entry name" value="RRM_NMI"/>
    <property type="match status" value="1"/>
</dbReference>
<dbReference type="FunFam" id="3.30.70.330:FF:000300">
    <property type="entry name" value="Interferon-induced protein 35"/>
    <property type="match status" value="1"/>
</dbReference>
<dbReference type="Gene3D" id="3.30.70.330">
    <property type="match status" value="1"/>
</dbReference>
<dbReference type="InterPro" id="IPR009909">
    <property type="entry name" value="Nmi/IFP35_dom"/>
</dbReference>
<dbReference type="InterPro" id="IPR009938">
    <property type="entry name" value="Nmi/IFP35_N"/>
</dbReference>
<dbReference type="InterPro" id="IPR012677">
    <property type="entry name" value="Nucleotide-bd_a/b_plait_sf"/>
</dbReference>
<dbReference type="PANTHER" id="PTHR15225">
    <property type="entry name" value="INTERFERON-INDUCED PROTEIN 35/NMI N-MYC/STAT INTERACTING PROTEIN"/>
    <property type="match status" value="1"/>
</dbReference>
<dbReference type="PANTHER" id="PTHR15225:SF4">
    <property type="entry name" value="N-MYC-INTERACTOR"/>
    <property type="match status" value="1"/>
</dbReference>
<dbReference type="Pfam" id="PF07334">
    <property type="entry name" value="IFP_35_N"/>
    <property type="match status" value="1"/>
</dbReference>
<dbReference type="Pfam" id="PF07292">
    <property type="entry name" value="NID"/>
    <property type="match status" value="2"/>
</dbReference>